<proteinExistence type="evidence at protein level"/>
<organism>
    <name type="scientific">Mus musculus</name>
    <name type="common">Mouse</name>
    <dbReference type="NCBI Taxonomy" id="10090"/>
    <lineage>
        <taxon>Eukaryota</taxon>
        <taxon>Metazoa</taxon>
        <taxon>Chordata</taxon>
        <taxon>Craniata</taxon>
        <taxon>Vertebrata</taxon>
        <taxon>Euteleostomi</taxon>
        <taxon>Mammalia</taxon>
        <taxon>Eutheria</taxon>
        <taxon>Euarchontoglires</taxon>
        <taxon>Glires</taxon>
        <taxon>Rodentia</taxon>
        <taxon>Myomorpha</taxon>
        <taxon>Muroidea</taxon>
        <taxon>Muridae</taxon>
        <taxon>Murinae</taxon>
        <taxon>Mus</taxon>
        <taxon>Mus</taxon>
    </lineage>
</organism>
<dbReference type="EC" id="5.4.99.2" evidence="3"/>
<dbReference type="EMBL" id="X51941">
    <property type="protein sequence ID" value="CAA36204.1"/>
    <property type="molecule type" value="mRNA"/>
</dbReference>
<dbReference type="EMBL" id="AK146309">
    <property type="protein sequence ID" value="BAE27064.1"/>
    <property type="molecule type" value="mRNA"/>
</dbReference>
<dbReference type="EMBL" id="CH466559">
    <property type="protein sequence ID" value="EDL23389.1"/>
    <property type="molecule type" value="Genomic_DNA"/>
</dbReference>
<dbReference type="CCDS" id="CCDS37618.1"/>
<dbReference type="PIR" id="S08680">
    <property type="entry name" value="S08680"/>
</dbReference>
<dbReference type="RefSeq" id="NP_032676.2">
    <property type="nucleotide sequence ID" value="NM_008650.3"/>
</dbReference>
<dbReference type="SMR" id="P16332"/>
<dbReference type="BioGRID" id="201624">
    <property type="interactions" value="13"/>
</dbReference>
<dbReference type="FunCoup" id="P16332">
    <property type="interactions" value="1511"/>
</dbReference>
<dbReference type="IntAct" id="P16332">
    <property type="interactions" value="1"/>
</dbReference>
<dbReference type="STRING" id="10090.ENSMUSP00000130941"/>
<dbReference type="GlyGen" id="P16332">
    <property type="glycosylation" value="2 sites, 1 N-linked glycan (1 site), 1 O-linked glycan (1 site)"/>
</dbReference>
<dbReference type="iPTMnet" id="P16332"/>
<dbReference type="PhosphoSitePlus" id="P16332"/>
<dbReference type="SwissPalm" id="P16332"/>
<dbReference type="jPOST" id="P16332"/>
<dbReference type="PaxDb" id="10090-ENSMUSP00000130941"/>
<dbReference type="PeptideAtlas" id="P16332"/>
<dbReference type="ProteomicsDB" id="252616"/>
<dbReference type="Pumba" id="P16332"/>
<dbReference type="Antibodypedia" id="30809">
    <property type="antibodies" value="186 antibodies from 27 providers"/>
</dbReference>
<dbReference type="DNASU" id="17850"/>
<dbReference type="Ensembl" id="ENSMUST00000169611.4">
    <property type="protein sequence ID" value="ENSMUSP00000130941.3"/>
    <property type="gene ID" value="ENSMUSG00000023921.10"/>
</dbReference>
<dbReference type="GeneID" id="17850"/>
<dbReference type="KEGG" id="mmu:17850"/>
<dbReference type="UCSC" id="uc008coo.2">
    <property type="organism name" value="mouse"/>
</dbReference>
<dbReference type="AGR" id="MGI:97239"/>
<dbReference type="CTD" id="4594"/>
<dbReference type="MGI" id="MGI:97239">
    <property type="gene designation" value="Mmut"/>
</dbReference>
<dbReference type="VEuPathDB" id="HostDB:ENSMUSG00000023921"/>
<dbReference type="eggNOG" id="ENOG502QQ7X">
    <property type="taxonomic scope" value="Eukaryota"/>
</dbReference>
<dbReference type="GeneTree" id="ENSGT00390000011892"/>
<dbReference type="HOGENOM" id="CLU_009523_3_1_1"/>
<dbReference type="InParanoid" id="P16332"/>
<dbReference type="OMA" id="IQEETHI"/>
<dbReference type="OrthoDB" id="198977at2759"/>
<dbReference type="PhylomeDB" id="P16332"/>
<dbReference type="TreeFam" id="TF313557"/>
<dbReference type="Reactome" id="R-MMU-71032">
    <property type="pathway name" value="Propionyl-CoA catabolism"/>
</dbReference>
<dbReference type="Reactome" id="R-MMU-9759218">
    <property type="pathway name" value="Cobalamin (Cbl) metabolism"/>
</dbReference>
<dbReference type="BioGRID-ORCS" id="17850">
    <property type="hits" value="6 hits in 81 CRISPR screens"/>
</dbReference>
<dbReference type="ChiTaRS" id="Mut">
    <property type="organism name" value="mouse"/>
</dbReference>
<dbReference type="PRO" id="PR:P16332"/>
<dbReference type="Proteomes" id="UP000000589">
    <property type="component" value="Chromosome 17"/>
</dbReference>
<dbReference type="RNAct" id="P16332">
    <property type="molecule type" value="protein"/>
</dbReference>
<dbReference type="Bgee" id="ENSMUSG00000023921">
    <property type="expression patterns" value="Expressed in brown adipose tissue and 271 other cell types or tissues"/>
</dbReference>
<dbReference type="ExpressionAtlas" id="P16332">
    <property type="expression patterns" value="baseline and differential"/>
</dbReference>
<dbReference type="GO" id="GO:0005759">
    <property type="term" value="C:mitochondrial matrix"/>
    <property type="evidence" value="ECO:0000250"/>
    <property type="project" value="UniProtKB"/>
</dbReference>
<dbReference type="GO" id="GO:0005739">
    <property type="term" value="C:mitochondrion"/>
    <property type="evidence" value="ECO:0007005"/>
    <property type="project" value="MGI"/>
</dbReference>
<dbReference type="GO" id="GO:0031419">
    <property type="term" value="F:cobalamin binding"/>
    <property type="evidence" value="ECO:0000250"/>
    <property type="project" value="UniProtKB"/>
</dbReference>
<dbReference type="GO" id="GO:0003924">
    <property type="term" value="F:GTPase activity"/>
    <property type="evidence" value="ECO:0000250"/>
    <property type="project" value="UniProtKB"/>
</dbReference>
<dbReference type="GO" id="GO:0042802">
    <property type="term" value="F:identical protein binding"/>
    <property type="evidence" value="ECO:0000250"/>
    <property type="project" value="UniProtKB"/>
</dbReference>
<dbReference type="GO" id="GO:0046872">
    <property type="term" value="F:metal ion binding"/>
    <property type="evidence" value="ECO:0007669"/>
    <property type="project" value="UniProtKB-KW"/>
</dbReference>
<dbReference type="GO" id="GO:0004494">
    <property type="term" value="F:methylmalonyl-CoA mutase activity"/>
    <property type="evidence" value="ECO:0000314"/>
    <property type="project" value="UniProtKB"/>
</dbReference>
<dbReference type="GO" id="GO:0072341">
    <property type="term" value="F:modified amino acid binding"/>
    <property type="evidence" value="ECO:0007669"/>
    <property type="project" value="Ensembl"/>
</dbReference>
<dbReference type="GO" id="GO:0042803">
    <property type="term" value="F:protein homodimerization activity"/>
    <property type="evidence" value="ECO:0000250"/>
    <property type="project" value="UniProtKB"/>
</dbReference>
<dbReference type="GO" id="GO:0050667">
    <property type="term" value="P:homocysteine metabolic process"/>
    <property type="evidence" value="ECO:0007669"/>
    <property type="project" value="Ensembl"/>
</dbReference>
<dbReference type="GO" id="GO:0009791">
    <property type="term" value="P:post-embryonic development"/>
    <property type="evidence" value="ECO:0000315"/>
    <property type="project" value="MGI"/>
</dbReference>
<dbReference type="GO" id="GO:1901290">
    <property type="term" value="P:succinyl-CoA biosynthetic process"/>
    <property type="evidence" value="ECO:0000314"/>
    <property type="project" value="MGI"/>
</dbReference>
<dbReference type="CDD" id="cd02071">
    <property type="entry name" value="MM_CoA_mut_B12_BD"/>
    <property type="match status" value="1"/>
</dbReference>
<dbReference type="CDD" id="cd03679">
    <property type="entry name" value="MM_CoA_mutase_alpha_like"/>
    <property type="match status" value="1"/>
</dbReference>
<dbReference type="FunFam" id="3.20.20.240:FF:000002">
    <property type="entry name" value="Methylmalonyl-CoA mutase, mitochondrial"/>
    <property type="match status" value="1"/>
</dbReference>
<dbReference type="FunFam" id="3.40.50.280:FF:000002">
    <property type="entry name" value="Methylmalonyl-CoA mutase, mitochondrial"/>
    <property type="match status" value="1"/>
</dbReference>
<dbReference type="Gene3D" id="3.40.50.280">
    <property type="entry name" value="Cobalamin-binding domain"/>
    <property type="match status" value="1"/>
</dbReference>
<dbReference type="Gene3D" id="3.20.20.240">
    <property type="entry name" value="Methylmalonyl-CoA mutase"/>
    <property type="match status" value="1"/>
</dbReference>
<dbReference type="InterPro" id="IPR006159">
    <property type="entry name" value="Acid_CoA_mut_C"/>
</dbReference>
<dbReference type="InterPro" id="IPR016176">
    <property type="entry name" value="Cbl-dep_enz_cat"/>
</dbReference>
<dbReference type="InterPro" id="IPR006158">
    <property type="entry name" value="Cobalamin-bd"/>
</dbReference>
<dbReference type="InterPro" id="IPR036724">
    <property type="entry name" value="Cobalamin-bd_sf"/>
</dbReference>
<dbReference type="InterPro" id="IPR006099">
    <property type="entry name" value="MeMalonylCoA_mutase_a/b_cat"/>
</dbReference>
<dbReference type="InterPro" id="IPR006098">
    <property type="entry name" value="MMCoA_mutase_a_cat"/>
</dbReference>
<dbReference type="NCBIfam" id="TIGR00640">
    <property type="entry name" value="acid_CoA_mut_C"/>
    <property type="match status" value="1"/>
</dbReference>
<dbReference type="NCBIfam" id="TIGR00641">
    <property type="entry name" value="acid_CoA_mut_N"/>
    <property type="match status" value="1"/>
</dbReference>
<dbReference type="NCBIfam" id="NF006944">
    <property type="entry name" value="PRK09426.1"/>
    <property type="match status" value="1"/>
</dbReference>
<dbReference type="PANTHER" id="PTHR48101:SF4">
    <property type="entry name" value="METHYLMALONYL-COA MUTASE, MITOCHONDRIAL"/>
    <property type="match status" value="1"/>
</dbReference>
<dbReference type="PANTHER" id="PTHR48101">
    <property type="entry name" value="METHYLMALONYL-COA MUTASE, MITOCHONDRIAL-RELATED"/>
    <property type="match status" value="1"/>
</dbReference>
<dbReference type="Pfam" id="PF02310">
    <property type="entry name" value="B12-binding"/>
    <property type="match status" value="1"/>
</dbReference>
<dbReference type="Pfam" id="PF01642">
    <property type="entry name" value="MM_CoA_mutase"/>
    <property type="match status" value="1"/>
</dbReference>
<dbReference type="SUPFAM" id="SSF52242">
    <property type="entry name" value="Cobalamin (vitamin B12)-binding domain"/>
    <property type="match status" value="1"/>
</dbReference>
<dbReference type="SUPFAM" id="SSF51703">
    <property type="entry name" value="Cobalamin (vitamin B12)-dependent enzymes"/>
    <property type="match status" value="1"/>
</dbReference>
<dbReference type="PROSITE" id="PS51332">
    <property type="entry name" value="B12_BINDING"/>
    <property type="match status" value="1"/>
</dbReference>
<dbReference type="PROSITE" id="PS00544">
    <property type="entry name" value="METMALONYL_COA_MUTASE"/>
    <property type="match status" value="1"/>
</dbReference>
<keyword id="KW-0007">Acetylation</keyword>
<keyword id="KW-0846">Cobalamin</keyword>
<keyword id="KW-0170">Cobalt</keyword>
<keyword id="KW-0963">Cytoplasm</keyword>
<keyword id="KW-0413">Isomerase</keyword>
<keyword id="KW-0479">Metal-binding</keyword>
<keyword id="KW-0496">Mitochondrion</keyword>
<keyword id="KW-0597">Phosphoprotein</keyword>
<keyword id="KW-1185">Reference proteome</keyword>
<keyword id="KW-0809">Transit peptide</keyword>
<protein>
    <recommendedName>
        <fullName>Methylmalonyl-CoA mutase, mitochondrial</fullName>
        <shortName>MCM</shortName>
        <ecNumber evidence="3">5.4.99.2</ecNumber>
    </recommendedName>
    <alternativeName>
        <fullName>Methylmalonyl-CoA isomerase</fullName>
    </alternativeName>
</protein>
<feature type="transit peptide" description="Mitochondrion" evidence="1">
    <location>
        <begin position="1"/>
        <end position="30"/>
    </location>
</feature>
<feature type="chain" id="PRO_0000019295" description="Methylmalonyl-CoA mutase, mitochondrial">
    <location>
        <begin position="31"/>
        <end position="748"/>
    </location>
</feature>
<feature type="domain" description="B12-binding" evidence="2">
    <location>
        <begin position="612"/>
        <end position="744"/>
    </location>
</feature>
<feature type="binding site" evidence="1">
    <location>
        <position position="48"/>
    </location>
    <ligand>
        <name>malonyl-CoA</name>
        <dbReference type="ChEBI" id="CHEBI:57384"/>
    </ligand>
</feature>
<feature type="binding site" evidence="1">
    <location>
        <begin position="94"/>
        <end position="97"/>
    </location>
    <ligand>
        <name>malonyl-CoA</name>
        <dbReference type="ChEBI" id="CHEBI:57384"/>
    </ligand>
</feature>
<feature type="binding site" evidence="1">
    <location>
        <begin position="104"/>
        <end position="108"/>
    </location>
    <ligand>
        <name>malonyl-CoA</name>
        <dbReference type="ChEBI" id="CHEBI:57384"/>
    </ligand>
</feature>
<feature type="binding site" evidence="1">
    <location>
        <begin position="214"/>
        <end position="216"/>
    </location>
    <ligand>
        <name>malonyl-CoA</name>
        <dbReference type="ChEBI" id="CHEBI:57384"/>
    </ligand>
</feature>
<feature type="binding site" evidence="1">
    <location>
        <position position="226"/>
    </location>
    <ligand>
        <name>malonyl-CoA</name>
        <dbReference type="ChEBI" id="CHEBI:57384"/>
    </ligand>
</feature>
<feature type="binding site" evidence="1">
    <location>
        <position position="253"/>
    </location>
    <ligand>
        <name>malonyl-CoA</name>
        <dbReference type="ChEBI" id="CHEBI:57384"/>
    </ligand>
</feature>
<feature type="binding site" evidence="1">
    <location>
        <position position="263"/>
    </location>
    <ligand>
        <name>malonyl-CoA</name>
        <dbReference type="ChEBI" id="CHEBI:57384"/>
    </ligand>
</feature>
<feature type="binding site" evidence="1">
    <location>
        <begin position="302"/>
        <end position="304"/>
    </location>
    <ligand>
        <name>malonyl-CoA</name>
        <dbReference type="ChEBI" id="CHEBI:57384"/>
    </ligand>
</feature>
<feature type="binding site" description="axial binding residue" evidence="1">
    <location>
        <position position="625"/>
    </location>
    <ligand>
        <name>adenosylcob(III)alamin</name>
        <dbReference type="ChEBI" id="CHEBI:18408"/>
    </ligand>
    <ligandPart>
        <name>Co</name>
        <dbReference type="ChEBI" id="CHEBI:27638"/>
    </ligandPart>
</feature>
<feature type="modified residue" description="N6-acetyllysine" evidence="7">
    <location>
        <position position="87"/>
    </location>
</feature>
<feature type="modified residue" description="N6-acetyllysine" evidence="7">
    <location>
        <position position="210"/>
    </location>
</feature>
<feature type="modified residue" description="N6-acetyllysine" evidence="7">
    <location>
        <position position="333"/>
    </location>
</feature>
<feature type="modified residue" description="N6-succinyllysine" evidence="8">
    <location>
        <position position="341"/>
    </location>
</feature>
<feature type="modified residue" description="Phosphoserine" evidence="1">
    <location>
        <position position="479"/>
    </location>
</feature>
<feature type="modified residue" description="N6-succinyllysine" evidence="8">
    <location>
        <position position="593"/>
    </location>
</feature>
<feature type="modified residue" description="N6-acetyllysine" evidence="7">
    <location>
        <position position="600"/>
    </location>
</feature>
<feature type="sequence conflict" description="In Ref. 1; CAA36204." evidence="4" ref="1">
    <original>S</original>
    <variation>P</variation>
    <location>
        <position position="256"/>
    </location>
</feature>
<feature type="sequence conflict" description="In Ref. 1; CAA36204." evidence="4" ref="1">
    <original>A</original>
    <variation>T</variation>
    <location>
        <position position="269"/>
    </location>
</feature>
<feature type="sequence conflict" description="In Ref. 1; CAA36204." evidence="4" ref="1">
    <original>T</original>
    <variation>S</variation>
    <location>
        <position position="385"/>
    </location>
</feature>
<feature type="sequence conflict" description="In Ref. 1; CAA36204." evidence="4" ref="1">
    <original>Q</original>
    <variation>R</variation>
    <location>
        <position position="407"/>
    </location>
</feature>
<feature type="sequence conflict" description="In Ref. 1; CAA36204." evidence="4" ref="1">
    <original>Q</original>
    <variation>H</variation>
    <location>
        <position position="491"/>
    </location>
</feature>
<feature type="sequence conflict" description="In Ref. 1; CAA36204." evidence="4" ref="1">
    <original>EVLAIDNTSV</original>
    <variation>HLLAIDIISL</variation>
    <location>
        <begin position="499"/>
        <end position="508"/>
    </location>
</feature>
<feature type="sequence conflict" description="In Ref. 1; CAA36204." evidence="4" ref="1">
    <original>G</original>
    <variation>P</variation>
    <location>
        <position position="561"/>
    </location>
</feature>
<feature type="sequence conflict" description="In Ref. 1; CAA36204." evidence="4" ref="1">
    <original>L</original>
    <variation>F</variation>
    <location>
        <position position="567"/>
    </location>
</feature>
<feature type="sequence conflict" description="In Ref. 1; CAA36204." evidence="4" ref="1">
    <original>PR</original>
    <variation>LG</variation>
    <location>
        <begin position="613"/>
        <end position="614"/>
    </location>
</feature>
<feature type="sequence conflict" description="In Ref. 1; CAA36204." evidence="4" ref="1">
    <original>Q</original>
    <variation>K</variation>
    <location>
        <position position="622"/>
    </location>
</feature>
<feature type="sequence conflict" description="In Ref. 1; CAA36204." evidence="4" ref="1">
    <original>QQ</original>
    <variation>HD</variation>
    <location>
        <begin position="657"/>
        <end position="658"/>
    </location>
</feature>
<feature type="sequence conflict" description="In Ref. 1; CAA36204." evidence="4" ref="1">
    <original>L</original>
    <variation>H</variation>
    <location>
        <position position="672"/>
    </location>
</feature>
<evidence type="ECO:0000250" key="1">
    <source>
        <dbReference type="UniProtKB" id="P22033"/>
    </source>
</evidence>
<evidence type="ECO:0000255" key="2">
    <source>
        <dbReference type="PROSITE-ProRule" id="PRU00666"/>
    </source>
</evidence>
<evidence type="ECO:0000269" key="3">
    <source>
    </source>
</evidence>
<evidence type="ECO:0000305" key="4"/>
<evidence type="ECO:0000305" key="5">
    <source>
    </source>
</evidence>
<evidence type="ECO:0000312" key="6">
    <source>
        <dbReference type="MGI" id="MGI:97239"/>
    </source>
</evidence>
<evidence type="ECO:0007744" key="7">
    <source>
    </source>
</evidence>
<evidence type="ECO:0007744" key="8">
    <source>
    </source>
</evidence>
<gene>
    <name type="primary">Mmut</name>
    <name evidence="6" type="synonym">Mut</name>
</gene>
<reference key="1">
    <citation type="journal article" date="1990" name="Biochem. J.">
        <title>Primary structure and activity of mouse methylmalonyl-CoA mutase.</title>
        <authorList>
            <person name="Wilkemeyer M.F."/>
            <person name="Crane A.M."/>
            <person name="Ledley F.D."/>
        </authorList>
    </citation>
    <scope>NUCLEOTIDE SEQUENCE [MRNA]</scope>
    <scope>FUNCTION</scope>
    <scope>CATALYTIC ACTIVITY</scope>
    <scope>BIOPHYSICOCHEMICAL PROPERTIES</scope>
    <scope>COFACTOR</scope>
    <source>
        <tissue>Liver</tissue>
    </source>
</reference>
<reference key="2">
    <citation type="journal article" date="2005" name="Science">
        <title>The transcriptional landscape of the mammalian genome.</title>
        <authorList>
            <person name="Carninci P."/>
            <person name="Kasukawa T."/>
            <person name="Katayama S."/>
            <person name="Gough J."/>
            <person name="Frith M.C."/>
            <person name="Maeda N."/>
            <person name="Oyama R."/>
            <person name="Ravasi T."/>
            <person name="Lenhard B."/>
            <person name="Wells C."/>
            <person name="Kodzius R."/>
            <person name="Shimokawa K."/>
            <person name="Bajic V.B."/>
            <person name="Brenner S.E."/>
            <person name="Batalov S."/>
            <person name="Forrest A.R."/>
            <person name="Zavolan M."/>
            <person name="Davis M.J."/>
            <person name="Wilming L.G."/>
            <person name="Aidinis V."/>
            <person name="Allen J.E."/>
            <person name="Ambesi-Impiombato A."/>
            <person name="Apweiler R."/>
            <person name="Aturaliya R.N."/>
            <person name="Bailey T.L."/>
            <person name="Bansal M."/>
            <person name="Baxter L."/>
            <person name="Beisel K.W."/>
            <person name="Bersano T."/>
            <person name="Bono H."/>
            <person name="Chalk A.M."/>
            <person name="Chiu K.P."/>
            <person name="Choudhary V."/>
            <person name="Christoffels A."/>
            <person name="Clutterbuck D.R."/>
            <person name="Crowe M.L."/>
            <person name="Dalla E."/>
            <person name="Dalrymple B.P."/>
            <person name="de Bono B."/>
            <person name="Della Gatta G."/>
            <person name="di Bernardo D."/>
            <person name="Down T."/>
            <person name="Engstrom P."/>
            <person name="Fagiolini M."/>
            <person name="Faulkner G."/>
            <person name="Fletcher C.F."/>
            <person name="Fukushima T."/>
            <person name="Furuno M."/>
            <person name="Futaki S."/>
            <person name="Gariboldi M."/>
            <person name="Georgii-Hemming P."/>
            <person name="Gingeras T.R."/>
            <person name="Gojobori T."/>
            <person name="Green R.E."/>
            <person name="Gustincich S."/>
            <person name="Harbers M."/>
            <person name="Hayashi Y."/>
            <person name="Hensch T.K."/>
            <person name="Hirokawa N."/>
            <person name="Hill D."/>
            <person name="Huminiecki L."/>
            <person name="Iacono M."/>
            <person name="Ikeo K."/>
            <person name="Iwama A."/>
            <person name="Ishikawa T."/>
            <person name="Jakt M."/>
            <person name="Kanapin A."/>
            <person name="Katoh M."/>
            <person name="Kawasawa Y."/>
            <person name="Kelso J."/>
            <person name="Kitamura H."/>
            <person name="Kitano H."/>
            <person name="Kollias G."/>
            <person name="Krishnan S.P."/>
            <person name="Kruger A."/>
            <person name="Kummerfeld S.K."/>
            <person name="Kurochkin I.V."/>
            <person name="Lareau L.F."/>
            <person name="Lazarevic D."/>
            <person name="Lipovich L."/>
            <person name="Liu J."/>
            <person name="Liuni S."/>
            <person name="McWilliam S."/>
            <person name="Madan Babu M."/>
            <person name="Madera M."/>
            <person name="Marchionni L."/>
            <person name="Matsuda H."/>
            <person name="Matsuzawa S."/>
            <person name="Miki H."/>
            <person name="Mignone F."/>
            <person name="Miyake S."/>
            <person name="Morris K."/>
            <person name="Mottagui-Tabar S."/>
            <person name="Mulder N."/>
            <person name="Nakano N."/>
            <person name="Nakauchi H."/>
            <person name="Ng P."/>
            <person name="Nilsson R."/>
            <person name="Nishiguchi S."/>
            <person name="Nishikawa S."/>
            <person name="Nori F."/>
            <person name="Ohara O."/>
            <person name="Okazaki Y."/>
            <person name="Orlando V."/>
            <person name="Pang K.C."/>
            <person name="Pavan W.J."/>
            <person name="Pavesi G."/>
            <person name="Pesole G."/>
            <person name="Petrovsky N."/>
            <person name="Piazza S."/>
            <person name="Reed J."/>
            <person name="Reid J.F."/>
            <person name="Ring B.Z."/>
            <person name="Ringwald M."/>
            <person name="Rost B."/>
            <person name="Ruan Y."/>
            <person name="Salzberg S.L."/>
            <person name="Sandelin A."/>
            <person name="Schneider C."/>
            <person name="Schoenbach C."/>
            <person name="Sekiguchi K."/>
            <person name="Semple C.A."/>
            <person name="Seno S."/>
            <person name="Sessa L."/>
            <person name="Sheng Y."/>
            <person name="Shibata Y."/>
            <person name="Shimada H."/>
            <person name="Shimada K."/>
            <person name="Silva D."/>
            <person name="Sinclair B."/>
            <person name="Sperling S."/>
            <person name="Stupka E."/>
            <person name="Sugiura K."/>
            <person name="Sultana R."/>
            <person name="Takenaka Y."/>
            <person name="Taki K."/>
            <person name="Tammoja K."/>
            <person name="Tan S.L."/>
            <person name="Tang S."/>
            <person name="Taylor M.S."/>
            <person name="Tegner J."/>
            <person name="Teichmann S.A."/>
            <person name="Ueda H.R."/>
            <person name="van Nimwegen E."/>
            <person name="Verardo R."/>
            <person name="Wei C.L."/>
            <person name="Yagi K."/>
            <person name="Yamanishi H."/>
            <person name="Zabarovsky E."/>
            <person name="Zhu S."/>
            <person name="Zimmer A."/>
            <person name="Hide W."/>
            <person name="Bult C."/>
            <person name="Grimmond S.M."/>
            <person name="Teasdale R.D."/>
            <person name="Liu E.T."/>
            <person name="Brusic V."/>
            <person name="Quackenbush J."/>
            <person name="Wahlestedt C."/>
            <person name="Mattick J.S."/>
            <person name="Hume D.A."/>
            <person name="Kai C."/>
            <person name="Sasaki D."/>
            <person name="Tomaru Y."/>
            <person name="Fukuda S."/>
            <person name="Kanamori-Katayama M."/>
            <person name="Suzuki M."/>
            <person name="Aoki J."/>
            <person name="Arakawa T."/>
            <person name="Iida J."/>
            <person name="Imamura K."/>
            <person name="Itoh M."/>
            <person name="Kato T."/>
            <person name="Kawaji H."/>
            <person name="Kawagashira N."/>
            <person name="Kawashima T."/>
            <person name="Kojima M."/>
            <person name="Kondo S."/>
            <person name="Konno H."/>
            <person name="Nakano K."/>
            <person name="Ninomiya N."/>
            <person name="Nishio T."/>
            <person name="Okada M."/>
            <person name="Plessy C."/>
            <person name="Shibata K."/>
            <person name="Shiraki T."/>
            <person name="Suzuki S."/>
            <person name="Tagami M."/>
            <person name="Waki K."/>
            <person name="Watahiki A."/>
            <person name="Okamura-Oho Y."/>
            <person name="Suzuki H."/>
            <person name="Kawai J."/>
            <person name="Hayashizaki Y."/>
        </authorList>
    </citation>
    <scope>NUCLEOTIDE SEQUENCE [LARGE SCALE MRNA]</scope>
    <source>
        <strain>BALB/cJ</strain>
    </source>
</reference>
<reference key="3">
    <citation type="submission" date="2005-07" db="EMBL/GenBank/DDBJ databases">
        <authorList>
            <person name="Mural R.J."/>
            <person name="Adams M.D."/>
            <person name="Myers E.W."/>
            <person name="Smith H.O."/>
            <person name="Venter J.C."/>
        </authorList>
    </citation>
    <scope>NUCLEOTIDE SEQUENCE [LARGE SCALE GENOMIC DNA]</scope>
</reference>
<reference key="4">
    <citation type="journal article" date="2010" name="Cell">
        <title>A tissue-specific atlas of mouse protein phosphorylation and expression.</title>
        <authorList>
            <person name="Huttlin E.L."/>
            <person name="Jedrychowski M.P."/>
            <person name="Elias J.E."/>
            <person name="Goswami T."/>
            <person name="Rad R."/>
            <person name="Beausoleil S.A."/>
            <person name="Villen J."/>
            <person name="Haas W."/>
            <person name="Sowa M.E."/>
            <person name="Gygi S.P."/>
        </authorList>
    </citation>
    <scope>IDENTIFICATION BY MASS SPECTROMETRY [LARGE SCALE ANALYSIS]</scope>
    <source>
        <tissue>Brain</tissue>
        <tissue>Brown adipose tissue</tissue>
        <tissue>Heart</tissue>
        <tissue>Kidney</tissue>
        <tissue>Liver</tissue>
        <tissue>Lung</tissue>
        <tissue>Pancreas</tissue>
        <tissue>Spleen</tissue>
        <tissue>Testis</tissue>
    </source>
</reference>
<reference key="5">
    <citation type="journal article" date="2013" name="Mol. Cell">
        <title>SIRT5-mediated lysine desuccinylation impacts diverse metabolic pathways.</title>
        <authorList>
            <person name="Park J."/>
            <person name="Chen Y."/>
            <person name="Tishkoff D.X."/>
            <person name="Peng C."/>
            <person name="Tan M."/>
            <person name="Dai L."/>
            <person name="Xie Z."/>
            <person name="Zhang Y."/>
            <person name="Zwaans B.M."/>
            <person name="Skinner M.E."/>
            <person name="Lombard D.B."/>
            <person name="Zhao Y."/>
        </authorList>
    </citation>
    <scope>SUCCINYLATION [LARGE SCALE ANALYSIS] AT LYS-341 AND LYS-593</scope>
    <scope>IDENTIFICATION BY MASS SPECTROMETRY [LARGE SCALE ANALYSIS]</scope>
    <source>
        <tissue>Liver</tissue>
    </source>
</reference>
<reference key="6">
    <citation type="journal article" date="2013" name="Proc. Natl. Acad. Sci. U.S.A.">
        <title>Label-free quantitative proteomics of the lysine acetylome in mitochondria identifies substrates of SIRT3 in metabolic pathways.</title>
        <authorList>
            <person name="Rardin M.J."/>
            <person name="Newman J.C."/>
            <person name="Held J.M."/>
            <person name="Cusack M.P."/>
            <person name="Sorensen D.J."/>
            <person name="Li B."/>
            <person name="Schilling B."/>
            <person name="Mooney S.D."/>
            <person name="Kahn C.R."/>
            <person name="Verdin E."/>
            <person name="Gibson B.W."/>
        </authorList>
    </citation>
    <scope>ACETYLATION [LARGE SCALE ANALYSIS] AT LYS-87; LYS-210; LYS-333 AND LYS-600</scope>
    <scope>IDENTIFICATION BY MASS SPECTROMETRY [LARGE SCALE ANALYSIS]</scope>
    <source>
        <tissue>Liver</tissue>
    </source>
</reference>
<name>MUTA_MOUSE</name>
<accession>P16332</accession>
<accession>Q3UJU1</accession>
<comment type="function">
    <text evidence="3">Catalyzes the reversible isomerization of methylmalonyl-CoA (MMCoA) (generated from branched-chain amino acid metabolism and degradation of dietary odd chain fatty acids and cholesterol) to succinyl-CoA (3-carboxypropionyl-CoA), a key intermediate of the tricarboxylic acid cycle.</text>
</comment>
<comment type="catalytic activity">
    <reaction evidence="3">
        <text>(R)-methylmalonyl-CoA = succinyl-CoA</text>
        <dbReference type="Rhea" id="RHEA:22888"/>
        <dbReference type="ChEBI" id="CHEBI:57292"/>
        <dbReference type="ChEBI" id="CHEBI:57326"/>
        <dbReference type="EC" id="5.4.99.2"/>
    </reaction>
    <physiologicalReaction direction="left-to-right" evidence="5">
        <dbReference type="Rhea" id="RHEA:22889"/>
    </physiologicalReaction>
</comment>
<comment type="cofactor">
    <cofactor evidence="3">
        <name>adenosylcob(III)alamin</name>
        <dbReference type="ChEBI" id="CHEBI:18408"/>
    </cofactor>
</comment>
<comment type="activity regulation">
    <text evidence="1">Inhibited by itaconyl-CoA, a metabolite that inactivates the coenzyme B12 cofactor.</text>
</comment>
<comment type="biophysicochemical properties">
    <kinetics>
        <KM evidence="3">0.2 uM for adenosylcob(III)alamin</KM>
        <KM evidence="3">0.27 mM for methylmalonyl-CoA</KM>
    </kinetics>
</comment>
<comment type="subunit">
    <text evidence="1">Homodimer. Interacts (the apoenzyme form) with MMAA; the interaction is GTP dependent.</text>
</comment>
<comment type="subcellular location">
    <subcellularLocation>
        <location evidence="1">Mitochondrion matrix</location>
    </subcellularLocation>
    <subcellularLocation>
        <location evidence="1">Mitochondrion</location>
    </subcellularLocation>
    <subcellularLocation>
        <location evidence="1">Cytoplasm</location>
    </subcellularLocation>
</comment>
<comment type="similarity">
    <text evidence="4">Belongs to the methylmalonyl-CoA mutase family.</text>
</comment>
<sequence length="748" mass="82844">MLRAKNQLFLLSPHYLKQLNIPSASRWKRLLHQQQPLHPEWAVLAKKQLKGKNPEDLIWHTPEGISIKPLYSRADTLDLPEELPGVKPFTRGPYPTMYTYRPWTIRQYAGFSTVEESNKFYKDNIKAGQQGLSVAFDLATHRGYDSDNPRVRGDVGMAGVAIDTVEDTKILFDGIPLEKMSVSMTMNGAVIPVLATFIVTGEEQGVPKEKLTGTIQNDILKEFMVRNTYIFPPEPSMKIIADIFQYTAQHMPKFNSISISGYHMQEAGADAILELAYTIADGLEYCRTGLQAGLTIDEFAPRLSFFWGIGMNFYMEIAKMRAGRRLWAHLIEKMFQPKNSKSLLLRAHCQTSGWSLTEQDPYNNIVRTAIEAMAAVFGGTQSLHTNSFDEALGLPTVKSARIARNTQIIIQEESGIPKVADPWGGSYMMESLTNDVYEAALKLIYEVEEMGGMAKAVAEGIPKLRIEECAARRQARIDSGSEVIVGVNKYQLEKEDSVEVLAIDNTSVRKKQIEKLKKIKSSRDQALAEQCLSALTQCAASGDGNILALAVDAARARCTVGEITDALKKVFGEHKANDRMVSGAYRQEFGESKEITSAIKRVNKFMEREGRRPRLLVAKMGQDGHDRGAKVIATGFADLGFDVDIGPLFQTPREVAQQAVDADVHAVGVSTLAAGHKTLVPELIKELTALGRPDILVMCGGVIPPQDYEFLYEVGVSNVFGPGTRIPRAAVQVLDDIEKCLAEKQQSV</sequence>